<feature type="chain" id="PRO_0000229842" description="Phosphoribosyl-AMP cyclohydrolase">
    <location>
        <begin position="1"/>
        <end position="116"/>
    </location>
</feature>
<feature type="binding site" evidence="1">
    <location>
        <position position="85"/>
    </location>
    <ligand>
        <name>Mg(2+)</name>
        <dbReference type="ChEBI" id="CHEBI:18420"/>
    </ligand>
</feature>
<feature type="binding site" evidence="1">
    <location>
        <position position="86"/>
    </location>
    <ligand>
        <name>Zn(2+)</name>
        <dbReference type="ChEBI" id="CHEBI:29105"/>
        <note>ligand shared between dimeric partners</note>
    </ligand>
</feature>
<feature type="binding site" evidence="1">
    <location>
        <position position="87"/>
    </location>
    <ligand>
        <name>Mg(2+)</name>
        <dbReference type="ChEBI" id="CHEBI:18420"/>
    </ligand>
</feature>
<feature type="binding site" evidence="1">
    <location>
        <position position="89"/>
    </location>
    <ligand>
        <name>Mg(2+)</name>
        <dbReference type="ChEBI" id="CHEBI:18420"/>
    </ligand>
</feature>
<feature type="binding site" evidence="1">
    <location>
        <position position="102"/>
    </location>
    <ligand>
        <name>Zn(2+)</name>
        <dbReference type="ChEBI" id="CHEBI:29105"/>
        <note>ligand shared between dimeric partners</note>
    </ligand>
</feature>
<feature type="binding site" evidence="1">
    <location>
        <position position="109"/>
    </location>
    <ligand>
        <name>Zn(2+)</name>
        <dbReference type="ChEBI" id="CHEBI:29105"/>
        <note>ligand shared between dimeric partners</note>
    </ligand>
</feature>
<name>HIS3_THEFY</name>
<accession>Q47QS0</accession>
<sequence>MSGSPPQLDPEIAARLKRTPDGLVPAIVQQYDTGEVLMLAWMDDEALRRTLTTRAATYWSRSRGEYWVKGATSGNTQRVVSVSLDCDGDTLLVKVDQTGGACHTGDRTCFDADRLL</sequence>
<gene>
    <name evidence="1" type="primary">hisI</name>
    <name type="ordered locus">Tfu_1159</name>
</gene>
<comment type="function">
    <text evidence="1">Catalyzes the hydrolysis of the adenine ring of phosphoribosyl-AMP.</text>
</comment>
<comment type="catalytic activity">
    <reaction evidence="1">
        <text>1-(5-phospho-beta-D-ribosyl)-5'-AMP + H2O = 1-(5-phospho-beta-D-ribosyl)-5-[(5-phospho-beta-D-ribosylamino)methylideneamino]imidazole-4-carboxamide</text>
        <dbReference type="Rhea" id="RHEA:20049"/>
        <dbReference type="ChEBI" id="CHEBI:15377"/>
        <dbReference type="ChEBI" id="CHEBI:58435"/>
        <dbReference type="ChEBI" id="CHEBI:59457"/>
        <dbReference type="EC" id="3.5.4.19"/>
    </reaction>
</comment>
<comment type="cofactor">
    <cofactor evidence="1">
        <name>Mg(2+)</name>
        <dbReference type="ChEBI" id="CHEBI:18420"/>
    </cofactor>
    <text evidence="1">Binds 1 Mg(2+) ion per subunit.</text>
</comment>
<comment type="cofactor">
    <cofactor evidence="1">
        <name>Zn(2+)</name>
        <dbReference type="ChEBI" id="CHEBI:29105"/>
    </cofactor>
    <text evidence="1">Binds 1 zinc ion per subunit.</text>
</comment>
<comment type="pathway">
    <text evidence="1">Amino-acid biosynthesis; L-histidine biosynthesis; L-histidine from 5-phospho-alpha-D-ribose 1-diphosphate: step 3/9.</text>
</comment>
<comment type="subunit">
    <text evidence="1">Homodimer.</text>
</comment>
<comment type="subcellular location">
    <subcellularLocation>
        <location evidence="1">Cytoplasm</location>
    </subcellularLocation>
</comment>
<comment type="similarity">
    <text evidence="1">Belongs to the PRA-CH family.</text>
</comment>
<proteinExistence type="inferred from homology"/>
<keyword id="KW-0028">Amino-acid biosynthesis</keyword>
<keyword id="KW-0963">Cytoplasm</keyword>
<keyword id="KW-0368">Histidine biosynthesis</keyword>
<keyword id="KW-0378">Hydrolase</keyword>
<keyword id="KW-0460">Magnesium</keyword>
<keyword id="KW-0479">Metal-binding</keyword>
<keyword id="KW-0862">Zinc</keyword>
<protein>
    <recommendedName>
        <fullName evidence="1">Phosphoribosyl-AMP cyclohydrolase</fullName>
        <shortName evidence="1">PRA-CH</shortName>
        <ecNumber evidence="1">3.5.4.19</ecNumber>
    </recommendedName>
</protein>
<reference key="1">
    <citation type="journal article" date="2007" name="J. Bacteriol.">
        <title>Genome sequence and analysis of the soil cellulolytic actinomycete Thermobifida fusca YX.</title>
        <authorList>
            <person name="Lykidis A."/>
            <person name="Mavromatis K."/>
            <person name="Ivanova N."/>
            <person name="Anderson I."/>
            <person name="Land M."/>
            <person name="DiBartolo G."/>
            <person name="Martinez M."/>
            <person name="Lapidus A."/>
            <person name="Lucas S."/>
            <person name="Copeland A."/>
            <person name="Richardson P."/>
            <person name="Wilson D.B."/>
            <person name="Kyrpides N."/>
        </authorList>
    </citation>
    <scope>NUCLEOTIDE SEQUENCE [LARGE SCALE GENOMIC DNA]</scope>
    <source>
        <strain>YX</strain>
    </source>
</reference>
<dbReference type="EC" id="3.5.4.19" evidence="1"/>
<dbReference type="EMBL" id="CP000088">
    <property type="protein sequence ID" value="AAZ55197.1"/>
    <property type="molecule type" value="Genomic_DNA"/>
</dbReference>
<dbReference type="RefSeq" id="WP_011291606.1">
    <property type="nucleotide sequence ID" value="NC_007333.1"/>
</dbReference>
<dbReference type="SMR" id="Q47QS0"/>
<dbReference type="STRING" id="269800.Tfu_1159"/>
<dbReference type="KEGG" id="tfu:Tfu_1159"/>
<dbReference type="eggNOG" id="COG0139">
    <property type="taxonomic scope" value="Bacteria"/>
</dbReference>
<dbReference type="HOGENOM" id="CLU_048577_5_1_11"/>
<dbReference type="OrthoDB" id="9795769at2"/>
<dbReference type="UniPathway" id="UPA00031">
    <property type="reaction ID" value="UER00008"/>
</dbReference>
<dbReference type="GO" id="GO:0005737">
    <property type="term" value="C:cytoplasm"/>
    <property type="evidence" value="ECO:0007669"/>
    <property type="project" value="UniProtKB-SubCell"/>
</dbReference>
<dbReference type="GO" id="GO:0000287">
    <property type="term" value="F:magnesium ion binding"/>
    <property type="evidence" value="ECO:0007669"/>
    <property type="project" value="UniProtKB-UniRule"/>
</dbReference>
<dbReference type="GO" id="GO:0004635">
    <property type="term" value="F:phosphoribosyl-AMP cyclohydrolase activity"/>
    <property type="evidence" value="ECO:0007669"/>
    <property type="project" value="UniProtKB-UniRule"/>
</dbReference>
<dbReference type="GO" id="GO:0008270">
    <property type="term" value="F:zinc ion binding"/>
    <property type="evidence" value="ECO:0007669"/>
    <property type="project" value="UniProtKB-UniRule"/>
</dbReference>
<dbReference type="GO" id="GO:0000105">
    <property type="term" value="P:L-histidine biosynthetic process"/>
    <property type="evidence" value="ECO:0007669"/>
    <property type="project" value="UniProtKB-UniRule"/>
</dbReference>
<dbReference type="FunFam" id="3.10.20.810:FF:000001">
    <property type="entry name" value="Histidine biosynthesis bifunctional protein HisIE"/>
    <property type="match status" value="1"/>
</dbReference>
<dbReference type="Gene3D" id="3.10.20.810">
    <property type="entry name" value="Phosphoribosyl-AMP cyclohydrolase"/>
    <property type="match status" value="1"/>
</dbReference>
<dbReference type="HAMAP" id="MF_01021">
    <property type="entry name" value="HisI"/>
    <property type="match status" value="1"/>
</dbReference>
<dbReference type="InterPro" id="IPR026660">
    <property type="entry name" value="PRA-CH"/>
</dbReference>
<dbReference type="InterPro" id="IPR002496">
    <property type="entry name" value="PRib_AMP_CycHydrolase_dom"/>
</dbReference>
<dbReference type="InterPro" id="IPR038019">
    <property type="entry name" value="PRib_AMP_CycHydrolase_sf"/>
</dbReference>
<dbReference type="NCBIfam" id="NF000768">
    <property type="entry name" value="PRK00051.1"/>
    <property type="match status" value="1"/>
</dbReference>
<dbReference type="PANTHER" id="PTHR42945">
    <property type="entry name" value="HISTIDINE BIOSYNTHESIS BIFUNCTIONAL PROTEIN"/>
    <property type="match status" value="1"/>
</dbReference>
<dbReference type="PANTHER" id="PTHR42945:SF11">
    <property type="entry name" value="PHOSPHORIBOSYL-AMP CYCLOHYDROLASE"/>
    <property type="match status" value="1"/>
</dbReference>
<dbReference type="Pfam" id="PF01502">
    <property type="entry name" value="PRA-CH"/>
    <property type="match status" value="1"/>
</dbReference>
<dbReference type="SUPFAM" id="SSF141734">
    <property type="entry name" value="HisI-like"/>
    <property type="match status" value="1"/>
</dbReference>
<organism>
    <name type="scientific">Thermobifida fusca (strain YX)</name>
    <dbReference type="NCBI Taxonomy" id="269800"/>
    <lineage>
        <taxon>Bacteria</taxon>
        <taxon>Bacillati</taxon>
        <taxon>Actinomycetota</taxon>
        <taxon>Actinomycetes</taxon>
        <taxon>Streptosporangiales</taxon>
        <taxon>Nocardiopsidaceae</taxon>
        <taxon>Thermobifida</taxon>
    </lineage>
</organism>
<evidence type="ECO:0000255" key="1">
    <source>
        <dbReference type="HAMAP-Rule" id="MF_01021"/>
    </source>
</evidence>